<dbReference type="EC" id="2.5.1.6" evidence="1"/>
<dbReference type="EMBL" id="CP000410">
    <property type="protein sequence ID" value="ABJ53863.1"/>
    <property type="molecule type" value="Genomic_DNA"/>
</dbReference>
<dbReference type="RefSeq" id="WP_000003935.1">
    <property type="nucleotide sequence ID" value="NZ_JAMLJR010000001.1"/>
</dbReference>
<dbReference type="SMR" id="Q04LE0"/>
<dbReference type="PaxDb" id="373153-SPD_0664"/>
<dbReference type="KEGG" id="spd:SPD_0664"/>
<dbReference type="eggNOG" id="COG0192">
    <property type="taxonomic scope" value="Bacteria"/>
</dbReference>
<dbReference type="HOGENOM" id="CLU_041802_1_1_9"/>
<dbReference type="BioCyc" id="SPNE373153:G1G6V-730-MONOMER"/>
<dbReference type="UniPathway" id="UPA00315">
    <property type="reaction ID" value="UER00080"/>
</dbReference>
<dbReference type="Proteomes" id="UP000001452">
    <property type="component" value="Chromosome"/>
</dbReference>
<dbReference type="GO" id="GO:0005737">
    <property type="term" value="C:cytoplasm"/>
    <property type="evidence" value="ECO:0007669"/>
    <property type="project" value="UniProtKB-SubCell"/>
</dbReference>
<dbReference type="GO" id="GO:0005524">
    <property type="term" value="F:ATP binding"/>
    <property type="evidence" value="ECO:0007669"/>
    <property type="project" value="UniProtKB-UniRule"/>
</dbReference>
<dbReference type="GO" id="GO:0000287">
    <property type="term" value="F:magnesium ion binding"/>
    <property type="evidence" value="ECO:0007669"/>
    <property type="project" value="UniProtKB-UniRule"/>
</dbReference>
<dbReference type="GO" id="GO:0004478">
    <property type="term" value="F:methionine adenosyltransferase activity"/>
    <property type="evidence" value="ECO:0007669"/>
    <property type="project" value="UniProtKB-UniRule"/>
</dbReference>
<dbReference type="GO" id="GO:0006730">
    <property type="term" value="P:one-carbon metabolic process"/>
    <property type="evidence" value="ECO:0007669"/>
    <property type="project" value="UniProtKB-KW"/>
</dbReference>
<dbReference type="GO" id="GO:0006556">
    <property type="term" value="P:S-adenosylmethionine biosynthetic process"/>
    <property type="evidence" value="ECO:0007669"/>
    <property type="project" value="UniProtKB-UniRule"/>
</dbReference>
<dbReference type="CDD" id="cd18079">
    <property type="entry name" value="S-AdoMet_synt"/>
    <property type="match status" value="1"/>
</dbReference>
<dbReference type="FunFam" id="3.30.300.10:FF:000003">
    <property type="entry name" value="S-adenosylmethionine synthase"/>
    <property type="match status" value="1"/>
</dbReference>
<dbReference type="Gene3D" id="3.30.300.10">
    <property type="match status" value="3"/>
</dbReference>
<dbReference type="HAMAP" id="MF_00086">
    <property type="entry name" value="S_AdoMet_synth1"/>
    <property type="match status" value="1"/>
</dbReference>
<dbReference type="InterPro" id="IPR022631">
    <property type="entry name" value="ADOMET_SYNTHASE_CS"/>
</dbReference>
<dbReference type="InterPro" id="IPR022630">
    <property type="entry name" value="S-AdoMet_synt_C"/>
</dbReference>
<dbReference type="InterPro" id="IPR022629">
    <property type="entry name" value="S-AdoMet_synt_central"/>
</dbReference>
<dbReference type="InterPro" id="IPR022628">
    <property type="entry name" value="S-AdoMet_synt_N"/>
</dbReference>
<dbReference type="InterPro" id="IPR002133">
    <property type="entry name" value="S-AdoMet_synthetase"/>
</dbReference>
<dbReference type="InterPro" id="IPR022636">
    <property type="entry name" value="S-AdoMet_synthetase_sfam"/>
</dbReference>
<dbReference type="NCBIfam" id="TIGR01034">
    <property type="entry name" value="metK"/>
    <property type="match status" value="1"/>
</dbReference>
<dbReference type="PANTHER" id="PTHR11964">
    <property type="entry name" value="S-ADENOSYLMETHIONINE SYNTHETASE"/>
    <property type="match status" value="1"/>
</dbReference>
<dbReference type="Pfam" id="PF02773">
    <property type="entry name" value="S-AdoMet_synt_C"/>
    <property type="match status" value="1"/>
</dbReference>
<dbReference type="Pfam" id="PF02772">
    <property type="entry name" value="S-AdoMet_synt_M"/>
    <property type="match status" value="1"/>
</dbReference>
<dbReference type="Pfam" id="PF00438">
    <property type="entry name" value="S-AdoMet_synt_N"/>
    <property type="match status" value="1"/>
</dbReference>
<dbReference type="PIRSF" id="PIRSF000497">
    <property type="entry name" value="MAT"/>
    <property type="match status" value="1"/>
</dbReference>
<dbReference type="SUPFAM" id="SSF55973">
    <property type="entry name" value="S-adenosylmethionine synthetase"/>
    <property type="match status" value="3"/>
</dbReference>
<dbReference type="PROSITE" id="PS00376">
    <property type="entry name" value="ADOMET_SYNTHASE_1"/>
    <property type="match status" value="1"/>
</dbReference>
<dbReference type="PROSITE" id="PS00377">
    <property type="entry name" value="ADOMET_SYNTHASE_2"/>
    <property type="match status" value="1"/>
</dbReference>
<name>METK_STRP2</name>
<protein>
    <recommendedName>
        <fullName evidence="1">S-adenosylmethionine synthase</fullName>
        <shortName evidence="1">AdoMet synthase</shortName>
        <ecNumber evidence="1">2.5.1.6</ecNumber>
    </recommendedName>
    <alternativeName>
        <fullName evidence="1">MAT</fullName>
    </alternativeName>
    <alternativeName>
        <fullName evidence="1">Methionine adenosyltransferase</fullName>
    </alternativeName>
</protein>
<organism>
    <name type="scientific">Streptococcus pneumoniae serotype 2 (strain D39 / NCTC 7466)</name>
    <dbReference type="NCBI Taxonomy" id="373153"/>
    <lineage>
        <taxon>Bacteria</taxon>
        <taxon>Bacillati</taxon>
        <taxon>Bacillota</taxon>
        <taxon>Bacilli</taxon>
        <taxon>Lactobacillales</taxon>
        <taxon>Streptococcaceae</taxon>
        <taxon>Streptococcus</taxon>
    </lineage>
</organism>
<reference key="1">
    <citation type="journal article" date="2007" name="J. Bacteriol.">
        <title>Genome sequence of Avery's virulent serotype 2 strain D39 of Streptococcus pneumoniae and comparison with that of unencapsulated laboratory strain R6.</title>
        <authorList>
            <person name="Lanie J.A."/>
            <person name="Ng W.-L."/>
            <person name="Kazmierczak K.M."/>
            <person name="Andrzejewski T.M."/>
            <person name="Davidsen T.M."/>
            <person name="Wayne K.J."/>
            <person name="Tettelin H."/>
            <person name="Glass J.I."/>
            <person name="Winkler M.E."/>
        </authorList>
    </citation>
    <scope>NUCLEOTIDE SEQUENCE [LARGE SCALE GENOMIC DNA]</scope>
    <source>
        <strain>D39 / NCTC 7466</strain>
    </source>
</reference>
<sequence length="396" mass="43115">MSERKLFTSESVSEGHPDKIADQISDAILDAILAKDPEAHVAAETAVYTGSVHVFGEISTNAYVDINRVVRDTIAEIGYTNTEYGFSAETVGVHPSLVEQSPDIAQGVNEALEVRGNADQDPLDLIGAGDQGLMFGFAVDETEELMPLPIALSHKLVRRLAELRKSGEISYLRPDAKSQVTVEYDENDRPVRVDTVVISTQHDPEATNEQIHQDVIDKVIKEVIPSSYLDDKTKFFINPTGRFVIGGPQGDSGLTGRKIIVDTYGGYSRHGGGAFSGKDATKVDRSASYAARYIAKNIVAAGLAKKAEVQLAYAIGVAQPVSVRIDTFGTGTVAESQLEKAARQIFDLRPAGIIQMLDLKRPIYRQTSAYGHMGRTDIDLPWERLDKVDALKEAVK</sequence>
<comment type="function">
    <text evidence="1">Catalyzes the formation of S-adenosylmethionine (AdoMet) from methionine and ATP. The overall synthetic reaction is composed of two sequential steps, AdoMet formation and the subsequent tripolyphosphate hydrolysis which occurs prior to release of AdoMet from the enzyme.</text>
</comment>
<comment type="catalytic activity">
    <reaction evidence="1">
        <text>L-methionine + ATP + H2O = S-adenosyl-L-methionine + phosphate + diphosphate</text>
        <dbReference type="Rhea" id="RHEA:21080"/>
        <dbReference type="ChEBI" id="CHEBI:15377"/>
        <dbReference type="ChEBI" id="CHEBI:30616"/>
        <dbReference type="ChEBI" id="CHEBI:33019"/>
        <dbReference type="ChEBI" id="CHEBI:43474"/>
        <dbReference type="ChEBI" id="CHEBI:57844"/>
        <dbReference type="ChEBI" id="CHEBI:59789"/>
        <dbReference type="EC" id="2.5.1.6"/>
    </reaction>
</comment>
<comment type="cofactor">
    <cofactor evidence="1">
        <name>Mg(2+)</name>
        <dbReference type="ChEBI" id="CHEBI:18420"/>
    </cofactor>
    <text evidence="1">Binds 2 divalent ions per subunit.</text>
</comment>
<comment type="cofactor">
    <cofactor evidence="1">
        <name>K(+)</name>
        <dbReference type="ChEBI" id="CHEBI:29103"/>
    </cofactor>
    <text evidence="1">Binds 1 potassium ion per subunit.</text>
</comment>
<comment type="pathway">
    <text evidence="1">Amino-acid biosynthesis; S-adenosyl-L-methionine biosynthesis; S-adenosyl-L-methionine from L-methionine: step 1/1.</text>
</comment>
<comment type="subunit">
    <text evidence="1">Homotetramer; dimer of dimers.</text>
</comment>
<comment type="subcellular location">
    <subcellularLocation>
        <location evidence="1">Cytoplasm</location>
    </subcellularLocation>
</comment>
<comment type="similarity">
    <text evidence="1">Belongs to the AdoMet synthase family.</text>
</comment>
<proteinExistence type="inferred from homology"/>
<accession>Q04LE0</accession>
<feature type="chain" id="PRO_0000302986" description="S-adenosylmethionine synthase">
    <location>
        <begin position="1"/>
        <end position="396"/>
    </location>
</feature>
<feature type="region of interest" description="Flexible loop" evidence="1">
    <location>
        <begin position="100"/>
        <end position="110"/>
    </location>
</feature>
<feature type="binding site" description="in other chain" evidence="1">
    <location>
        <position position="16"/>
    </location>
    <ligand>
        <name>ATP</name>
        <dbReference type="ChEBI" id="CHEBI:30616"/>
        <note>ligand shared between two neighboring subunits</note>
    </ligand>
</feature>
<feature type="binding site" evidence="1">
    <location>
        <position position="18"/>
    </location>
    <ligand>
        <name>Mg(2+)</name>
        <dbReference type="ChEBI" id="CHEBI:18420"/>
    </ligand>
</feature>
<feature type="binding site" evidence="1">
    <location>
        <position position="44"/>
    </location>
    <ligand>
        <name>K(+)</name>
        <dbReference type="ChEBI" id="CHEBI:29103"/>
    </ligand>
</feature>
<feature type="binding site" description="in other chain" evidence="1">
    <location>
        <position position="57"/>
    </location>
    <ligand>
        <name>L-methionine</name>
        <dbReference type="ChEBI" id="CHEBI:57844"/>
        <note>ligand shared between two neighboring subunits</note>
    </ligand>
</feature>
<feature type="binding site" description="in other chain" evidence="1">
    <location>
        <position position="100"/>
    </location>
    <ligand>
        <name>L-methionine</name>
        <dbReference type="ChEBI" id="CHEBI:57844"/>
        <note>ligand shared between two neighboring subunits</note>
    </ligand>
</feature>
<feature type="binding site" description="in other chain" evidence="1">
    <location>
        <begin position="175"/>
        <end position="177"/>
    </location>
    <ligand>
        <name>ATP</name>
        <dbReference type="ChEBI" id="CHEBI:30616"/>
        <note>ligand shared between two neighboring subunits</note>
    </ligand>
</feature>
<feature type="binding site" description="in other chain" evidence="1">
    <location>
        <begin position="242"/>
        <end position="243"/>
    </location>
    <ligand>
        <name>ATP</name>
        <dbReference type="ChEBI" id="CHEBI:30616"/>
        <note>ligand shared between two neighboring subunits</note>
    </ligand>
</feature>
<feature type="binding site" evidence="1">
    <location>
        <position position="251"/>
    </location>
    <ligand>
        <name>ATP</name>
        <dbReference type="ChEBI" id="CHEBI:30616"/>
        <note>ligand shared between two neighboring subunits</note>
    </ligand>
</feature>
<feature type="binding site" evidence="1">
    <location>
        <position position="251"/>
    </location>
    <ligand>
        <name>L-methionine</name>
        <dbReference type="ChEBI" id="CHEBI:57844"/>
        <note>ligand shared between two neighboring subunits</note>
    </ligand>
</feature>
<feature type="binding site" description="in other chain" evidence="1">
    <location>
        <begin position="257"/>
        <end position="258"/>
    </location>
    <ligand>
        <name>ATP</name>
        <dbReference type="ChEBI" id="CHEBI:30616"/>
        <note>ligand shared between two neighboring subunits</note>
    </ligand>
</feature>
<feature type="binding site" evidence="1">
    <location>
        <position position="274"/>
    </location>
    <ligand>
        <name>ATP</name>
        <dbReference type="ChEBI" id="CHEBI:30616"/>
        <note>ligand shared between two neighboring subunits</note>
    </ligand>
</feature>
<feature type="binding site" evidence="1">
    <location>
        <position position="278"/>
    </location>
    <ligand>
        <name>ATP</name>
        <dbReference type="ChEBI" id="CHEBI:30616"/>
        <note>ligand shared between two neighboring subunits</note>
    </ligand>
</feature>
<feature type="binding site" description="in other chain" evidence="1">
    <location>
        <position position="282"/>
    </location>
    <ligand>
        <name>L-methionine</name>
        <dbReference type="ChEBI" id="CHEBI:57844"/>
        <note>ligand shared between two neighboring subunits</note>
    </ligand>
</feature>
<gene>
    <name evidence="1" type="primary">metK</name>
    <name type="ordered locus">SPD_0664</name>
</gene>
<keyword id="KW-0067">ATP-binding</keyword>
<keyword id="KW-0963">Cytoplasm</keyword>
<keyword id="KW-0460">Magnesium</keyword>
<keyword id="KW-0479">Metal-binding</keyword>
<keyword id="KW-0547">Nucleotide-binding</keyword>
<keyword id="KW-0554">One-carbon metabolism</keyword>
<keyword id="KW-0630">Potassium</keyword>
<keyword id="KW-1185">Reference proteome</keyword>
<keyword id="KW-0808">Transferase</keyword>
<evidence type="ECO:0000255" key="1">
    <source>
        <dbReference type="HAMAP-Rule" id="MF_00086"/>
    </source>
</evidence>